<protein>
    <recommendedName>
        <fullName evidence="15">Secondary metabolism regulator laeA</fullName>
    </recommendedName>
    <alternativeName>
        <fullName evidence="15">Methyltransferase laeA</fullName>
        <ecNumber evidence="1">2.1.1.-</ecNumber>
    </alternativeName>
    <alternativeName>
        <fullName evidence="15">Velvet complex subunit laeA</fullName>
    </alternativeName>
</protein>
<name>LAEA_ASPFU</name>
<reference key="1">
    <citation type="journal article" date="2004" name="Eukaryot. Cell">
        <title>LaeA, a regulator of secondary metabolism in Aspergillus spp.</title>
        <authorList>
            <person name="Bok J.W."/>
            <person name="Keller N.P."/>
        </authorList>
    </citation>
    <scope>NUCLEOTIDE SEQUENCE [GENOMIC DNA]</scope>
    <scope>FUNCTION</scope>
    <scope>DISRUPTION PHENOTYPE</scope>
</reference>
<reference key="2">
    <citation type="journal article" date="2005" name="Nature">
        <title>Genomic sequence of the pathogenic and allergenic filamentous fungus Aspergillus fumigatus.</title>
        <authorList>
            <person name="Nierman W.C."/>
            <person name="Pain A."/>
            <person name="Anderson M.J."/>
            <person name="Wortman J.R."/>
            <person name="Kim H.S."/>
            <person name="Arroyo J."/>
            <person name="Berriman M."/>
            <person name="Abe K."/>
            <person name="Archer D.B."/>
            <person name="Bermejo C."/>
            <person name="Bennett J.W."/>
            <person name="Bowyer P."/>
            <person name="Chen D."/>
            <person name="Collins M."/>
            <person name="Coulsen R."/>
            <person name="Davies R."/>
            <person name="Dyer P.S."/>
            <person name="Farman M.L."/>
            <person name="Fedorova N."/>
            <person name="Fedorova N.D."/>
            <person name="Feldblyum T.V."/>
            <person name="Fischer R."/>
            <person name="Fosker N."/>
            <person name="Fraser A."/>
            <person name="Garcia J.L."/>
            <person name="Garcia M.J."/>
            <person name="Goble A."/>
            <person name="Goldman G.H."/>
            <person name="Gomi K."/>
            <person name="Griffith-Jones S."/>
            <person name="Gwilliam R."/>
            <person name="Haas B.J."/>
            <person name="Haas H."/>
            <person name="Harris D.E."/>
            <person name="Horiuchi H."/>
            <person name="Huang J."/>
            <person name="Humphray S."/>
            <person name="Jimenez J."/>
            <person name="Keller N."/>
            <person name="Khouri H."/>
            <person name="Kitamoto K."/>
            <person name="Kobayashi T."/>
            <person name="Konzack S."/>
            <person name="Kulkarni R."/>
            <person name="Kumagai T."/>
            <person name="Lafton A."/>
            <person name="Latge J.-P."/>
            <person name="Li W."/>
            <person name="Lord A."/>
            <person name="Lu C."/>
            <person name="Majoros W.H."/>
            <person name="May G.S."/>
            <person name="Miller B.L."/>
            <person name="Mohamoud Y."/>
            <person name="Molina M."/>
            <person name="Monod M."/>
            <person name="Mouyna I."/>
            <person name="Mulligan S."/>
            <person name="Murphy L.D."/>
            <person name="O'Neil S."/>
            <person name="Paulsen I."/>
            <person name="Penalva M.A."/>
            <person name="Pertea M."/>
            <person name="Price C."/>
            <person name="Pritchard B.L."/>
            <person name="Quail M.A."/>
            <person name="Rabbinowitsch E."/>
            <person name="Rawlins N."/>
            <person name="Rajandream M.A."/>
            <person name="Reichard U."/>
            <person name="Renauld H."/>
            <person name="Robson G.D."/>
            <person name="Rodriguez de Cordoba S."/>
            <person name="Rodriguez-Pena J.M."/>
            <person name="Ronning C.M."/>
            <person name="Rutter S."/>
            <person name="Salzberg S.L."/>
            <person name="Sanchez M."/>
            <person name="Sanchez-Ferrero J.C."/>
            <person name="Saunders D."/>
            <person name="Seeger K."/>
            <person name="Squares R."/>
            <person name="Squares S."/>
            <person name="Takeuchi M."/>
            <person name="Tekaia F."/>
            <person name="Turner G."/>
            <person name="Vazquez de Aldana C.R."/>
            <person name="Weidman J."/>
            <person name="White O."/>
            <person name="Woodward J.R."/>
            <person name="Yu J.-H."/>
            <person name="Fraser C.M."/>
            <person name="Galagan J.E."/>
            <person name="Asai K."/>
            <person name="Machida M."/>
            <person name="Hall N."/>
            <person name="Barrell B.G."/>
            <person name="Denning D.W."/>
        </authorList>
    </citation>
    <scope>NUCLEOTIDE SEQUENCE [LARGE SCALE GENOMIC DNA]</scope>
    <source>
        <strain>ATCC MYA-4609 / CBS 101355 / FGSC A1100 / Af293</strain>
    </source>
</reference>
<reference key="3">
    <citation type="journal article" date="2005" name="Eukaryot. Cell">
        <title>LaeA, a regulator of morphogenetic fungal virulence factors.</title>
        <authorList>
            <person name="Bok J.W."/>
            <person name="Balajee S.A."/>
            <person name="Marr K.A."/>
            <person name="Andes D."/>
            <person name="Nielsen K.F."/>
            <person name="Frisvad J.C."/>
            <person name="Keller N.P."/>
        </authorList>
    </citation>
    <scope>FUNCTION</scope>
    <scope>DISRUPTION PHENOTYPE</scope>
</reference>
<reference key="4">
    <citation type="journal article" date="2007" name="Eukaryot. Cell">
        <title>Role of laeA in the regulation of alb1, gliP, conidial morphology, and virulence in Aspergillus fumigatus.</title>
        <authorList>
            <person name="Sugui J.A."/>
            <person name="Pardo J."/>
            <person name="Chang Y.C."/>
            <person name="Muellbacher A."/>
            <person name="Zarember K.A."/>
            <person name="Galvez E.M."/>
            <person name="Brinster L."/>
            <person name="Zerfas P."/>
            <person name="Gallin J.I."/>
            <person name="Simon M.M."/>
            <person name="Kwon-Chung K.J."/>
        </authorList>
    </citation>
    <scope>FUNCTION</scope>
    <scope>DISRUPTION PHENOTYPE</scope>
</reference>
<reference key="5">
    <citation type="journal article" date="2007" name="PLoS Pathog.">
        <title>Transcriptional regulation of chemical diversity in Aspergillus fumigatus by LaeA.</title>
        <authorList>
            <person name="Perrin R.M."/>
            <person name="Fedorova N.D."/>
            <person name="Bok J.W."/>
            <person name="Cramer R.A."/>
            <person name="Wortman J.R."/>
            <person name="Kim H.S."/>
            <person name="Nierman W.C."/>
            <person name="Keller N.P."/>
        </authorList>
    </citation>
    <scope>FUNCTION</scope>
    <scope>DISRUPTION PHENOTYPE</scope>
</reference>
<reference key="6">
    <citation type="journal article" date="2009" name="Blood">
        <title>Aspergillus fumigatus inhibits angiogenesis through the production of gliotoxin and other secondary metabolites.</title>
        <authorList>
            <person name="Ben-Ami R."/>
            <person name="Lewis R.E."/>
            <person name="Leventakos K."/>
            <person name="Kontoyiannis D.P."/>
        </authorList>
    </citation>
    <scope>FUNCTION</scope>
</reference>
<reference key="7">
    <citation type="journal article" date="2010" name="Infect. Immun.">
        <title>Aspergillus fumigatus LaeA-mediated phagocytosis is associated with a decreased hydrophobin layer.</title>
        <authorList>
            <person name="Dagenais T.R."/>
            <person name="Giles S.S."/>
            <person name="Aimanianda V."/>
            <person name="Latge J.P."/>
            <person name="Hull C.M."/>
            <person name="Keller N.P."/>
        </authorList>
    </citation>
    <scope>FUNCTION</scope>
    <scope>DISRUPTION PHENOTYPE</scope>
</reference>
<reference key="8">
    <citation type="journal article" date="2012" name="Appl. Environ. Microbiol.">
        <title>Genome-based cluster deletion reveals an endocrocin biosynthetic pathway in Aspergillus fumigatus.</title>
        <authorList>
            <person name="Lim F.Y."/>
            <person name="Hou Y."/>
            <person name="Chen Y."/>
            <person name="Oh J.H."/>
            <person name="Lee I."/>
            <person name="Bugni T.S."/>
            <person name="Keller N.P."/>
        </authorList>
    </citation>
    <scope>FUNCTION</scope>
    <scope>DISRUPTION PHENOTYPE</scope>
</reference>
<reference key="9">
    <citation type="journal article" date="2012" name="Fungal Genet. Biol.">
        <title>NosA, a transcription factor important in Aspergillus fumigatus stress and developmental response, rescues the germination defect of a laeA deletion.</title>
        <authorList>
            <person name="Soukup A.A."/>
            <person name="Farnoodian M."/>
            <person name="Berthier E."/>
            <person name="Keller N.P."/>
        </authorList>
    </citation>
    <scope>DISRUPTION PHENOTYPE</scope>
</reference>
<reference key="10">
    <citation type="journal article" date="2013" name="Microbiology">
        <title>Transcriptomic and morphological profiling of Aspergillus fumigatus Af293 in response to antifungal activity produced by Lactobacillus plantarum 16.</title>
        <authorList>
            <person name="Crowley S."/>
            <person name="Mahony J."/>
            <person name="Morrissey J.P."/>
            <person name="van Sinderen D."/>
        </authorList>
    </citation>
    <scope>INDUCTION</scope>
</reference>
<reference key="11">
    <citation type="journal article" date="2013" name="PLoS ONE">
        <title>The fumagillin gene cluster, an example of hundreds of genes under veA control in Aspergillus fumigatus.</title>
        <authorList>
            <person name="Dhingra S."/>
            <person name="Lind A.L."/>
            <person name="Lin H.C."/>
            <person name="Tang Y."/>
            <person name="Rokas A."/>
            <person name="Calvo A.M."/>
        </authorList>
    </citation>
    <scope>FUNCTION</scope>
</reference>
<reference key="12">
    <citation type="journal article" date="2013" name="Proc. Natl. Acad. Sci. U.S.A.">
        <title>Prototype of an intertwined secondary-metabolite supercluster.</title>
        <authorList>
            <person name="Wiemann P."/>
            <person name="Guo C.J."/>
            <person name="Palmer J.M."/>
            <person name="Sekonyela R."/>
            <person name="Wang C.C."/>
            <person name="Keller N.P."/>
        </authorList>
    </citation>
    <scope>FUNCTION</scope>
</reference>
<comment type="function">
    <text evidence="1 3 4 5 6 7 8 9 12 13">Methyltransferase that performs automethylation (By similarity). No other methyl-accepting substrate has been identified yet (By similarity). Component of the velvet transcription factor complex that acts as a global regulator for secondary metabolite gene expression (PubMed:15075281, PubMed:17630330, PubMed:19843884, PubMed:24082142, PubMed:24116213). Positively controls expression of 20% to 40% of major classes of secondary metabolite biosynthesis genes such as nonribosomal peptide synthetases, polyketide synthases, and P450 monooxygenases (PubMed:17432932). Controls the expression of the gliotoxin gene cluster (PubMed:15075281, PubMed:17630330, PubMed:19843884). Controls the expression of the fumitremorgin, fumagillin, and pseurotin gene clusters, where genes for fumagillin and pseurotin are physically intertwined in a single supercluster (PubMed:24082142). Regulates the biosynthetic genes required for endocrocin production (PubMed:22492455). Secondary metabolites under the transcriptional regulation of laeA are necessary for inhibition of angiogenesis during invasive infection in mice (PubMed:19843884). Controls the expression of cell surface rodA, a hydrophobin that acts as an antiphagocytic molecule (PubMed:19917717). Also regulates the expression of genes involved in conidial biosynthesis (PubMed:16151250).</text>
</comment>
<comment type="catalytic activity">
    <reaction evidence="1">
        <text>L-methionyl-[protein] + S-adenosyl-L-methionine = S-methyl-L-methionyl-[protein] + S-adenosyl-L-homocysteine</text>
        <dbReference type="Rhea" id="RHEA:60560"/>
        <dbReference type="Rhea" id="RHEA-COMP:12313"/>
        <dbReference type="Rhea" id="RHEA-COMP:15592"/>
        <dbReference type="ChEBI" id="CHEBI:16044"/>
        <dbReference type="ChEBI" id="CHEBI:57856"/>
        <dbReference type="ChEBI" id="CHEBI:59789"/>
        <dbReference type="ChEBI" id="CHEBI:142742"/>
    </reaction>
    <physiologicalReaction direction="left-to-right" evidence="1">
        <dbReference type="Rhea" id="RHEA:60561"/>
    </physiologicalReaction>
</comment>
<comment type="subunit">
    <text evidence="1">Component of the heterotrimeric velvet complex composed of laeA, veA and velB; VeA acting as a bridging protein between laeA and velB (By similarity).</text>
</comment>
<comment type="subcellular location">
    <subcellularLocation>
        <location evidence="1">Nucleus</location>
    </subcellularLocation>
</comment>
<comment type="induction">
    <text evidence="11">Expression is induces in response to antifungal activity produced by Lactobacillus plantarum (PubMed:23876797).</text>
</comment>
<comment type="disruption phenotype">
    <text evidence="3 4 5 6 8 9 10">Reduces the production of the immunotoxin gliotoxin (PubMed:15075281, PubMed:16151250, PubMed:17630330). Reduces the production of endocrocin (PubMed:22492455). Affects transcription of numerous secondary metabolite biosynthesis genes (PubMed:17432932). Decreases spore formation and germination (PubMed:23022264). Reduces virulence in a murine pulmonary infection model through increased phagocytosis by host macrophages (PubMed:16151250, PubMed:19917717).</text>
</comment>
<comment type="similarity">
    <text evidence="15">Belongs to the methyltransferase superfamily. LaeA methyltransferase family.</text>
</comment>
<comment type="sequence caution" evidence="15">
    <conflict type="erroneous gene model prediction">
        <sequence resource="EMBL-CDS" id="AAR01218"/>
    </conflict>
</comment>
<gene>
    <name evidence="14" type="primary">laeA</name>
    <name type="ORF">AFUA_1G14660</name>
</gene>
<evidence type="ECO:0000250" key="1">
    <source>
        <dbReference type="UniProtKB" id="C8VQG9"/>
    </source>
</evidence>
<evidence type="ECO:0000256" key="2">
    <source>
        <dbReference type="SAM" id="MobiDB-lite"/>
    </source>
</evidence>
<evidence type="ECO:0000269" key="3">
    <source>
    </source>
</evidence>
<evidence type="ECO:0000269" key="4">
    <source>
    </source>
</evidence>
<evidence type="ECO:0000269" key="5">
    <source>
    </source>
</evidence>
<evidence type="ECO:0000269" key="6">
    <source>
    </source>
</evidence>
<evidence type="ECO:0000269" key="7">
    <source>
    </source>
</evidence>
<evidence type="ECO:0000269" key="8">
    <source>
    </source>
</evidence>
<evidence type="ECO:0000269" key="9">
    <source>
    </source>
</evidence>
<evidence type="ECO:0000269" key="10">
    <source>
    </source>
</evidence>
<evidence type="ECO:0000269" key="11">
    <source>
    </source>
</evidence>
<evidence type="ECO:0000269" key="12">
    <source>
    </source>
</evidence>
<evidence type="ECO:0000269" key="13">
    <source>
    </source>
</evidence>
<evidence type="ECO:0000303" key="14">
    <source>
    </source>
</evidence>
<evidence type="ECO:0000305" key="15"/>
<keyword id="KW-0489">Methyltransferase</keyword>
<keyword id="KW-0539">Nucleus</keyword>
<keyword id="KW-1185">Reference proteome</keyword>
<keyword id="KW-0949">S-adenosyl-L-methionine</keyword>
<keyword id="KW-0749">Sporulation</keyword>
<keyword id="KW-0804">Transcription</keyword>
<keyword id="KW-0805">Transcription regulation</keyword>
<keyword id="KW-0808">Transferase</keyword>
<keyword id="KW-0843">Virulence</keyword>
<sequence length="373" mass="42581">MFLNGQGGQRPPMVAFPPLNVRGSISSGFNALGRSRNNSDAMDIYTITDRGPAAERDPAAGRWHANGSPSINSTSSKNPDRYPCYQENGRTYHGYRKGIYMLPCDEQEQDRLDIFHKLFTVARVSDGLIYAPHPTNGRFLDLGCGTGIWAIDVANKYPEAFVVGVDLAPIQPPNHPRNCDFYAPFDFESLWALGEDSWDLIHMQMGSGSVASWPNLYRRIYSHLRPGAWFEQVEIDFEPRCDDRSLEGLAIRQWYQLLKQATEETMRPVAHNSRETIRNLQEAGFTEIDHQMVGLPLNPWHEDEHERRVARWYNLAISESIETMSLAPFSRVFGWPIERIKQIAADVKSEAFNKEIHTYNILHIYQARKPLAN</sequence>
<feature type="chain" id="PRO_0000435743" description="Secondary metabolism regulator laeA">
    <location>
        <begin position="1"/>
        <end position="373"/>
    </location>
</feature>
<feature type="region of interest" description="Disordered" evidence="2">
    <location>
        <begin position="55"/>
        <end position="81"/>
    </location>
</feature>
<feature type="compositionally biased region" description="Polar residues" evidence="2">
    <location>
        <begin position="67"/>
        <end position="77"/>
    </location>
</feature>
<accession>Q4WRY5</accession>
<accession>Q6TFC7</accession>
<organism>
    <name type="scientific">Aspergillus fumigatus (strain ATCC MYA-4609 / CBS 101355 / FGSC A1100 / Af293)</name>
    <name type="common">Neosartorya fumigata</name>
    <dbReference type="NCBI Taxonomy" id="330879"/>
    <lineage>
        <taxon>Eukaryota</taxon>
        <taxon>Fungi</taxon>
        <taxon>Dikarya</taxon>
        <taxon>Ascomycota</taxon>
        <taxon>Pezizomycotina</taxon>
        <taxon>Eurotiomycetes</taxon>
        <taxon>Eurotiomycetidae</taxon>
        <taxon>Eurotiales</taxon>
        <taxon>Aspergillaceae</taxon>
        <taxon>Aspergillus</taxon>
        <taxon>Aspergillus subgen. Fumigati</taxon>
    </lineage>
</organism>
<dbReference type="EC" id="2.1.1.-" evidence="1"/>
<dbReference type="EMBL" id="AY422723">
    <property type="protein sequence ID" value="AAR01218.1"/>
    <property type="status" value="ALT_SEQ"/>
    <property type="molecule type" value="Genomic_DNA"/>
</dbReference>
<dbReference type="EMBL" id="AAHF01000004">
    <property type="protein sequence ID" value="EAL90797.1"/>
    <property type="molecule type" value="Genomic_DNA"/>
</dbReference>
<dbReference type="RefSeq" id="XP_752835.1">
    <property type="nucleotide sequence ID" value="XM_747742.1"/>
</dbReference>
<dbReference type="SMR" id="Q4WRY5"/>
<dbReference type="STRING" id="330879.Q4WRY5"/>
<dbReference type="EnsemblFungi" id="EAL90797">
    <property type="protein sequence ID" value="EAL90797"/>
    <property type="gene ID" value="AFUA_1G14660"/>
</dbReference>
<dbReference type="GeneID" id="3509858"/>
<dbReference type="KEGG" id="afm:AFUA_1G14660"/>
<dbReference type="VEuPathDB" id="FungiDB:Afu1g14660"/>
<dbReference type="eggNOG" id="ENOG502QQMC">
    <property type="taxonomic scope" value="Eukaryota"/>
</dbReference>
<dbReference type="HOGENOM" id="CLU_010595_2_0_1"/>
<dbReference type="InParanoid" id="Q4WRY5"/>
<dbReference type="OMA" id="CDFYAPF"/>
<dbReference type="OrthoDB" id="2013972at2759"/>
<dbReference type="PHI-base" id="PHI:482"/>
<dbReference type="Proteomes" id="UP000002530">
    <property type="component" value="Chromosome 1"/>
</dbReference>
<dbReference type="GO" id="GO:0005634">
    <property type="term" value="C:nucleus"/>
    <property type="evidence" value="ECO:0000247"/>
    <property type="project" value="AspGD"/>
</dbReference>
<dbReference type="GO" id="GO:0008168">
    <property type="term" value="F:methyltransferase activity"/>
    <property type="evidence" value="ECO:0000318"/>
    <property type="project" value="GO_Central"/>
</dbReference>
<dbReference type="GO" id="GO:0032259">
    <property type="term" value="P:methylation"/>
    <property type="evidence" value="ECO:0007669"/>
    <property type="project" value="UniProtKB-KW"/>
</dbReference>
<dbReference type="GO" id="GO:1900691">
    <property type="term" value="P:positive regulation of gliotoxin biosynthetic process"/>
    <property type="evidence" value="ECO:0000315"/>
    <property type="project" value="AspGD"/>
</dbReference>
<dbReference type="GO" id="GO:0043455">
    <property type="term" value="P:regulation of secondary metabolic process"/>
    <property type="evidence" value="ECO:0000315"/>
    <property type="project" value="AspGD"/>
</dbReference>
<dbReference type="GO" id="GO:1900376">
    <property type="term" value="P:regulation of secondary metabolite biosynthetic process"/>
    <property type="evidence" value="ECO:0000315"/>
    <property type="project" value="AspGD"/>
</dbReference>
<dbReference type="GO" id="GO:0044550">
    <property type="term" value="P:secondary metabolite biosynthetic process"/>
    <property type="evidence" value="ECO:0000315"/>
    <property type="project" value="AspGD"/>
</dbReference>
<dbReference type="GO" id="GO:0030435">
    <property type="term" value="P:sporulation resulting in formation of a cellular spore"/>
    <property type="evidence" value="ECO:0007669"/>
    <property type="project" value="UniProtKB-KW"/>
</dbReference>
<dbReference type="GO" id="GO:0052067">
    <property type="term" value="P:symbiont-mediated perturbation of host phagocytosis"/>
    <property type="evidence" value="ECO:0000315"/>
    <property type="project" value="AspGD"/>
</dbReference>
<dbReference type="CDD" id="cd02440">
    <property type="entry name" value="AdoMet_MTases"/>
    <property type="match status" value="1"/>
</dbReference>
<dbReference type="FunFam" id="3.40.50.150:FF:000393">
    <property type="entry name" value="Regulator of secondary metabolism LaeA"/>
    <property type="match status" value="1"/>
</dbReference>
<dbReference type="Gene3D" id="3.40.50.150">
    <property type="entry name" value="Vaccinia Virus protein VP39"/>
    <property type="match status" value="1"/>
</dbReference>
<dbReference type="InterPro" id="IPR029063">
    <property type="entry name" value="SAM-dependent_MTases_sf"/>
</dbReference>
<dbReference type="PANTHER" id="PTHR43591">
    <property type="entry name" value="METHYLTRANSFERASE"/>
    <property type="match status" value="1"/>
</dbReference>
<dbReference type="PANTHER" id="PTHR43591:SF30">
    <property type="entry name" value="PROTEIN-METHIONINE METHYLTRANSFERASE LAEA"/>
    <property type="match status" value="1"/>
</dbReference>
<dbReference type="Pfam" id="PF13489">
    <property type="entry name" value="Methyltransf_23"/>
    <property type="match status" value="1"/>
</dbReference>
<dbReference type="SUPFAM" id="SSF53335">
    <property type="entry name" value="S-adenosyl-L-methionine-dependent methyltransferases"/>
    <property type="match status" value="1"/>
</dbReference>
<proteinExistence type="evidence at transcript level"/>